<dbReference type="EC" id="3.4.21.-"/>
<dbReference type="EMBL" id="ACYE01000412">
    <property type="protein sequence ID" value="EFE38250.1"/>
    <property type="molecule type" value="Genomic_DNA"/>
</dbReference>
<dbReference type="RefSeq" id="XP_003018895.1">
    <property type="nucleotide sequence ID" value="XM_003018849.1"/>
</dbReference>
<dbReference type="SMR" id="D4DIS6"/>
<dbReference type="GlyCosmos" id="D4DIS6">
    <property type="glycosylation" value="3 sites, No reported glycans"/>
</dbReference>
<dbReference type="GeneID" id="9580066"/>
<dbReference type="KEGG" id="tve:TRV_07087"/>
<dbReference type="HOGENOM" id="CLU_011263_1_3_1"/>
<dbReference type="OrthoDB" id="6613at34384"/>
<dbReference type="Proteomes" id="UP000008383">
    <property type="component" value="Unassembled WGS sequence"/>
</dbReference>
<dbReference type="GO" id="GO:0005576">
    <property type="term" value="C:extracellular region"/>
    <property type="evidence" value="ECO:0007669"/>
    <property type="project" value="UniProtKB-SubCell"/>
</dbReference>
<dbReference type="GO" id="GO:0004252">
    <property type="term" value="F:serine-type endopeptidase activity"/>
    <property type="evidence" value="ECO:0007669"/>
    <property type="project" value="InterPro"/>
</dbReference>
<dbReference type="GO" id="GO:0006508">
    <property type="term" value="P:proteolysis"/>
    <property type="evidence" value="ECO:0007669"/>
    <property type="project" value="UniProtKB-KW"/>
</dbReference>
<dbReference type="CDD" id="cd04077">
    <property type="entry name" value="Peptidases_S8_PCSK9_ProteinaseK_like"/>
    <property type="match status" value="1"/>
</dbReference>
<dbReference type="FunFam" id="3.40.50.200:FF:000014">
    <property type="entry name" value="Proteinase K"/>
    <property type="match status" value="1"/>
</dbReference>
<dbReference type="Gene3D" id="3.30.70.80">
    <property type="entry name" value="Peptidase S8 propeptide/proteinase inhibitor I9"/>
    <property type="match status" value="1"/>
</dbReference>
<dbReference type="Gene3D" id="3.40.50.200">
    <property type="entry name" value="Peptidase S8/S53 domain"/>
    <property type="match status" value="1"/>
</dbReference>
<dbReference type="InterPro" id="IPR034193">
    <property type="entry name" value="PCSK9_ProteinaseK-like"/>
</dbReference>
<dbReference type="InterPro" id="IPR000209">
    <property type="entry name" value="Peptidase_S8/S53_dom"/>
</dbReference>
<dbReference type="InterPro" id="IPR036852">
    <property type="entry name" value="Peptidase_S8/S53_dom_sf"/>
</dbReference>
<dbReference type="InterPro" id="IPR023827">
    <property type="entry name" value="Peptidase_S8_Asp-AS"/>
</dbReference>
<dbReference type="InterPro" id="IPR022398">
    <property type="entry name" value="Peptidase_S8_His-AS"/>
</dbReference>
<dbReference type="InterPro" id="IPR023828">
    <property type="entry name" value="Peptidase_S8_Ser-AS"/>
</dbReference>
<dbReference type="InterPro" id="IPR050131">
    <property type="entry name" value="Peptidase_S8_subtilisin-like"/>
</dbReference>
<dbReference type="InterPro" id="IPR015500">
    <property type="entry name" value="Peptidase_S8_subtilisin-rel"/>
</dbReference>
<dbReference type="InterPro" id="IPR010259">
    <property type="entry name" value="S8pro/Inhibitor_I9"/>
</dbReference>
<dbReference type="InterPro" id="IPR037045">
    <property type="entry name" value="S8pro/Inhibitor_I9_sf"/>
</dbReference>
<dbReference type="PANTHER" id="PTHR43806:SF11">
    <property type="entry name" value="CEREVISIN-RELATED"/>
    <property type="match status" value="1"/>
</dbReference>
<dbReference type="PANTHER" id="PTHR43806">
    <property type="entry name" value="PEPTIDASE S8"/>
    <property type="match status" value="1"/>
</dbReference>
<dbReference type="Pfam" id="PF05922">
    <property type="entry name" value="Inhibitor_I9"/>
    <property type="match status" value="1"/>
</dbReference>
<dbReference type="Pfam" id="PF00082">
    <property type="entry name" value="Peptidase_S8"/>
    <property type="match status" value="1"/>
</dbReference>
<dbReference type="PRINTS" id="PR00723">
    <property type="entry name" value="SUBTILISIN"/>
</dbReference>
<dbReference type="SUPFAM" id="SSF54897">
    <property type="entry name" value="Protease propeptides/inhibitors"/>
    <property type="match status" value="1"/>
</dbReference>
<dbReference type="SUPFAM" id="SSF52743">
    <property type="entry name" value="Subtilisin-like"/>
    <property type="match status" value="1"/>
</dbReference>
<dbReference type="PROSITE" id="PS51892">
    <property type="entry name" value="SUBTILASE"/>
    <property type="match status" value="1"/>
</dbReference>
<dbReference type="PROSITE" id="PS00136">
    <property type="entry name" value="SUBTILASE_ASP"/>
    <property type="match status" value="1"/>
</dbReference>
<dbReference type="PROSITE" id="PS00137">
    <property type="entry name" value="SUBTILASE_HIS"/>
    <property type="match status" value="1"/>
</dbReference>
<dbReference type="PROSITE" id="PS00138">
    <property type="entry name" value="SUBTILASE_SER"/>
    <property type="match status" value="1"/>
</dbReference>
<name>SUB10_TRIVH</name>
<reference key="1">
    <citation type="journal article" date="2011" name="Genome Biol.">
        <title>Comparative and functional genomics provide insights into the pathogenicity of dermatophytic fungi.</title>
        <authorList>
            <person name="Burmester A."/>
            <person name="Shelest E."/>
            <person name="Gloeckner G."/>
            <person name="Heddergott C."/>
            <person name="Schindler S."/>
            <person name="Staib P."/>
            <person name="Heidel A."/>
            <person name="Felder M."/>
            <person name="Petzold A."/>
            <person name="Szafranski K."/>
            <person name="Feuermann M."/>
            <person name="Pedruzzi I."/>
            <person name="Priebe S."/>
            <person name="Groth M."/>
            <person name="Winkler R."/>
            <person name="Li W."/>
            <person name="Kniemeyer O."/>
            <person name="Schroeckh V."/>
            <person name="Hertweck C."/>
            <person name="Hube B."/>
            <person name="White T.C."/>
            <person name="Platzer M."/>
            <person name="Guthke R."/>
            <person name="Heitman J."/>
            <person name="Woestemeyer J."/>
            <person name="Zipfel P.F."/>
            <person name="Monod M."/>
            <person name="Brakhage A.A."/>
        </authorList>
    </citation>
    <scope>NUCLEOTIDE SEQUENCE [LARGE SCALE GENOMIC DNA]</scope>
    <source>
        <strain>HKI 0517</strain>
    </source>
</reference>
<feature type="signal peptide" evidence="2">
    <location>
        <begin position="1"/>
        <end position="19"/>
    </location>
</feature>
<feature type="propeptide" id="PRO_0000406396" evidence="1">
    <location>
        <begin position="20"/>
        <end position="117"/>
    </location>
</feature>
<feature type="chain" id="PRO_0000406397" description="Subtilisin-like protease 10">
    <location>
        <begin position="118"/>
        <end position="522"/>
    </location>
</feature>
<feature type="domain" description="Inhibitor I9" evidence="2">
    <location>
        <begin position="36"/>
        <end position="113"/>
    </location>
</feature>
<feature type="domain" description="Peptidase S8" evidence="3">
    <location>
        <begin position="127"/>
        <end position="405"/>
    </location>
</feature>
<feature type="region of interest" description="Disordered" evidence="4">
    <location>
        <begin position="383"/>
        <end position="515"/>
    </location>
</feature>
<feature type="compositionally biased region" description="Polar residues" evidence="4">
    <location>
        <begin position="383"/>
        <end position="397"/>
    </location>
</feature>
<feature type="compositionally biased region" description="Pro residues" evidence="4">
    <location>
        <begin position="432"/>
        <end position="459"/>
    </location>
</feature>
<feature type="active site" description="Charge relay system" evidence="3">
    <location>
        <position position="159"/>
    </location>
</feature>
<feature type="active site" description="Charge relay system" evidence="3">
    <location>
        <position position="190"/>
    </location>
</feature>
<feature type="active site" description="Charge relay system" evidence="3">
    <location>
        <position position="348"/>
    </location>
</feature>
<feature type="glycosylation site" description="N-linked (GlcNAc...) asparagine" evidence="2">
    <location>
        <position position="251"/>
    </location>
</feature>
<feature type="glycosylation site" description="N-linked (GlcNAc...) asparagine" evidence="2">
    <location>
        <position position="392"/>
    </location>
</feature>
<feature type="glycosylation site" description="N-linked (GlcNAc...) asparagine" evidence="2">
    <location>
        <position position="403"/>
    </location>
</feature>
<keyword id="KW-0325">Glycoprotein</keyword>
<keyword id="KW-0378">Hydrolase</keyword>
<keyword id="KW-0645">Protease</keyword>
<keyword id="KW-0964">Secreted</keyword>
<keyword id="KW-0720">Serine protease</keyword>
<keyword id="KW-0732">Signal</keyword>
<keyword id="KW-0843">Virulence</keyword>
<keyword id="KW-0865">Zymogen</keyword>
<proteinExistence type="inferred from homology"/>
<evidence type="ECO:0000250" key="1"/>
<evidence type="ECO:0000255" key="2"/>
<evidence type="ECO:0000255" key="3">
    <source>
        <dbReference type="PROSITE-ProRule" id="PRU01240"/>
    </source>
</evidence>
<evidence type="ECO:0000256" key="4">
    <source>
        <dbReference type="SAM" id="MobiDB-lite"/>
    </source>
</evidence>
<evidence type="ECO:0000305" key="5"/>
<comment type="function">
    <text evidence="1">Secreted subtilisin-like serine protease with keratinolytic activity that contributes to pathogenicity.</text>
</comment>
<comment type="subcellular location">
    <subcellularLocation>
        <location evidence="1">Secreted</location>
    </subcellularLocation>
</comment>
<comment type="similarity">
    <text evidence="5">Belongs to the peptidase S8 family.</text>
</comment>
<organism>
    <name type="scientific">Trichophyton verrucosum (strain HKI 0517)</name>
    <dbReference type="NCBI Taxonomy" id="663202"/>
    <lineage>
        <taxon>Eukaryota</taxon>
        <taxon>Fungi</taxon>
        <taxon>Dikarya</taxon>
        <taxon>Ascomycota</taxon>
        <taxon>Pezizomycotina</taxon>
        <taxon>Eurotiomycetes</taxon>
        <taxon>Eurotiomycetidae</taxon>
        <taxon>Onygenales</taxon>
        <taxon>Arthrodermataceae</taxon>
        <taxon>Trichophyton</taxon>
    </lineage>
</organism>
<protein>
    <recommendedName>
        <fullName>Subtilisin-like protease 10</fullName>
        <ecNumber>3.4.21.-</ecNumber>
    </recommendedName>
</protein>
<accession>D4DIS6</accession>
<gene>
    <name type="primary">SUB10</name>
    <name type="ORF">TRV_07087</name>
</gene>
<sequence>MFFFKGVVAVLSFFSAVNAAPFMKPNNGTGKYIPDSYIVLLKRDISHDDFELHKRWASDVHKRDVAKRGISFSGIGHSWATGSFRGYSGVFSRDTIEEIMKHEHVAHVERDQIGTSQGWVTQPKAPNWGLGRLSNSNPGNTDYTYDEGAGGNAVVYVIDSGIDTMHPEFQGRATWGANFIDKNNVDCWGHGTHCAGIIGSVTFGVAKRAAMIAVKVLDCNGQGPYSAFIAGLHWATEHAQKNGHIGRAIINFSLGGDNSPAVNQALEEAQKAGIFVSAAAGNFGSDAGSITPGGARLVCVIGNSDERDYRWTGQGPSNFGARVDIFAPGTDIMSTLPGGGSGVMTGTSMAAPHVAGQAAIQVSISGGGFDLSVACAFFKNSASASVKNPGPNTTNKLLVNGANGTKGPKQDENKPNKPPGQDEQPGQNKPPSQNPPPGQNPPPGQNPPPEQPAPSPPANPGDEPNPDGQPYPGDQPNPGDSGPSWWMPSGGLQPPAWWNRRPSFGGWNRPMWWNRPLSVWKL</sequence>